<name>SYFA_PROMM</name>
<sequence>MSATISLQQLTDQLDALEAEAVSAIAAAADADALEQLRVSLLGKKGRLSGVLGAMGKLPSEERPLVGQRANVLKTQVQNLLGERLQVVKAAALADRLLQETIDVTAPASGIPVGHRHPLITTTEQIVDLFSGLGYRVAEGPEVETDHYNFSALNIPEDHPARDMQDTFYLGGNLLLRTHTSPVQIRYLEENPPPVRIVAPGRVYRRDAVDATHSPVFHQVEVLAIDEGLDFSHLRGTVMAFLKAFFGDMPVRFRASYFPFTEPSAEVDVQWRGRWLEVMGCGMVDPAVLEGLGLDPERWSGFAAGLGVERFCMVRHGIDDIRRLYTSDLRFLEQF</sequence>
<proteinExistence type="inferred from homology"/>
<reference key="1">
    <citation type="journal article" date="2003" name="Nature">
        <title>Genome divergence in two Prochlorococcus ecotypes reflects oceanic niche differentiation.</title>
        <authorList>
            <person name="Rocap G."/>
            <person name="Larimer F.W."/>
            <person name="Lamerdin J.E."/>
            <person name="Malfatti S."/>
            <person name="Chain P."/>
            <person name="Ahlgren N.A."/>
            <person name="Arellano A."/>
            <person name="Coleman M."/>
            <person name="Hauser L."/>
            <person name="Hess W.R."/>
            <person name="Johnson Z.I."/>
            <person name="Land M.L."/>
            <person name="Lindell D."/>
            <person name="Post A.F."/>
            <person name="Regala W."/>
            <person name="Shah M."/>
            <person name="Shaw S.L."/>
            <person name="Steglich C."/>
            <person name="Sullivan M.B."/>
            <person name="Ting C.S."/>
            <person name="Tolonen A."/>
            <person name="Webb E.A."/>
            <person name="Zinser E.R."/>
            <person name="Chisholm S.W."/>
        </authorList>
    </citation>
    <scope>NUCLEOTIDE SEQUENCE [LARGE SCALE GENOMIC DNA]</scope>
    <source>
        <strain>MIT 9313</strain>
    </source>
</reference>
<keyword id="KW-0030">Aminoacyl-tRNA synthetase</keyword>
<keyword id="KW-0067">ATP-binding</keyword>
<keyword id="KW-0963">Cytoplasm</keyword>
<keyword id="KW-0436">Ligase</keyword>
<keyword id="KW-0460">Magnesium</keyword>
<keyword id="KW-0479">Metal-binding</keyword>
<keyword id="KW-0547">Nucleotide-binding</keyword>
<keyword id="KW-0648">Protein biosynthesis</keyword>
<keyword id="KW-1185">Reference proteome</keyword>
<evidence type="ECO:0000255" key="1">
    <source>
        <dbReference type="HAMAP-Rule" id="MF_00281"/>
    </source>
</evidence>
<comment type="catalytic activity">
    <reaction evidence="1">
        <text>tRNA(Phe) + L-phenylalanine + ATP = L-phenylalanyl-tRNA(Phe) + AMP + diphosphate + H(+)</text>
        <dbReference type="Rhea" id="RHEA:19413"/>
        <dbReference type="Rhea" id="RHEA-COMP:9668"/>
        <dbReference type="Rhea" id="RHEA-COMP:9699"/>
        <dbReference type="ChEBI" id="CHEBI:15378"/>
        <dbReference type="ChEBI" id="CHEBI:30616"/>
        <dbReference type="ChEBI" id="CHEBI:33019"/>
        <dbReference type="ChEBI" id="CHEBI:58095"/>
        <dbReference type="ChEBI" id="CHEBI:78442"/>
        <dbReference type="ChEBI" id="CHEBI:78531"/>
        <dbReference type="ChEBI" id="CHEBI:456215"/>
        <dbReference type="EC" id="6.1.1.20"/>
    </reaction>
</comment>
<comment type="cofactor">
    <cofactor evidence="1">
        <name>Mg(2+)</name>
        <dbReference type="ChEBI" id="CHEBI:18420"/>
    </cofactor>
    <text evidence="1">Binds 2 magnesium ions per tetramer.</text>
</comment>
<comment type="subunit">
    <text evidence="1">Tetramer of two alpha and two beta subunits.</text>
</comment>
<comment type="subcellular location">
    <subcellularLocation>
        <location evidence="1">Cytoplasm</location>
    </subcellularLocation>
</comment>
<comment type="similarity">
    <text evidence="1">Belongs to the class-II aminoacyl-tRNA synthetase family. Phe-tRNA synthetase alpha subunit type 1 subfamily.</text>
</comment>
<feature type="chain" id="PRO_0000126742" description="Phenylalanine--tRNA ligase alpha subunit">
    <location>
        <begin position="1"/>
        <end position="335"/>
    </location>
</feature>
<feature type="binding site" evidence="1">
    <location>
        <position position="262"/>
    </location>
    <ligand>
        <name>Mg(2+)</name>
        <dbReference type="ChEBI" id="CHEBI:18420"/>
        <note>shared with beta subunit</note>
    </ligand>
</feature>
<accession>Q7TV42</accession>
<organism>
    <name type="scientific">Prochlorococcus marinus (strain MIT 9313)</name>
    <dbReference type="NCBI Taxonomy" id="74547"/>
    <lineage>
        <taxon>Bacteria</taxon>
        <taxon>Bacillati</taxon>
        <taxon>Cyanobacteriota</taxon>
        <taxon>Cyanophyceae</taxon>
        <taxon>Synechococcales</taxon>
        <taxon>Prochlorococcaceae</taxon>
        <taxon>Prochlorococcus</taxon>
    </lineage>
</organism>
<dbReference type="EC" id="6.1.1.20" evidence="1"/>
<dbReference type="EMBL" id="BX548175">
    <property type="protein sequence ID" value="CAE20542.1"/>
    <property type="molecule type" value="Genomic_DNA"/>
</dbReference>
<dbReference type="RefSeq" id="WP_011129746.1">
    <property type="nucleotide sequence ID" value="NC_005071.1"/>
</dbReference>
<dbReference type="SMR" id="Q7TV42"/>
<dbReference type="KEGG" id="pmt:PMT_0367"/>
<dbReference type="eggNOG" id="COG0016">
    <property type="taxonomic scope" value="Bacteria"/>
</dbReference>
<dbReference type="HOGENOM" id="CLU_025086_0_1_3"/>
<dbReference type="OrthoDB" id="9800719at2"/>
<dbReference type="Proteomes" id="UP000001423">
    <property type="component" value="Chromosome"/>
</dbReference>
<dbReference type="GO" id="GO:0005737">
    <property type="term" value="C:cytoplasm"/>
    <property type="evidence" value="ECO:0007669"/>
    <property type="project" value="UniProtKB-SubCell"/>
</dbReference>
<dbReference type="GO" id="GO:0005524">
    <property type="term" value="F:ATP binding"/>
    <property type="evidence" value="ECO:0007669"/>
    <property type="project" value="UniProtKB-UniRule"/>
</dbReference>
<dbReference type="GO" id="GO:0000287">
    <property type="term" value="F:magnesium ion binding"/>
    <property type="evidence" value="ECO:0007669"/>
    <property type="project" value="UniProtKB-UniRule"/>
</dbReference>
<dbReference type="GO" id="GO:0004826">
    <property type="term" value="F:phenylalanine-tRNA ligase activity"/>
    <property type="evidence" value="ECO:0007669"/>
    <property type="project" value="UniProtKB-UniRule"/>
</dbReference>
<dbReference type="GO" id="GO:0000049">
    <property type="term" value="F:tRNA binding"/>
    <property type="evidence" value="ECO:0007669"/>
    <property type="project" value="InterPro"/>
</dbReference>
<dbReference type="GO" id="GO:0006432">
    <property type="term" value="P:phenylalanyl-tRNA aminoacylation"/>
    <property type="evidence" value="ECO:0007669"/>
    <property type="project" value="UniProtKB-UniRule"/>
</dbReference>
<dbReference type="CDD" id="cd00496">
    <property type="entry name" value="PheRS_alpha_core"/>
    <property type="match status" value="1"/>
</dbReference>
<dbReference type="FunFam" id="3.30.930.10:FF:000003">
    <property type="entry name" value="Phenylalanine--tRNA ligase alpha subunit"/>
    <property type="match status" value="1"/>
</dbReference>
<dbReference type="Gene3D" id="3.30.930.10">
    <property type="entry name" value="Bira Bifunctional Protein, Domain 2"/>
    <property type="match status" value="1"/>
</dbReference>
<dbReference type="HAMAP" id="MF_00281">
    <property type="entry name" value="Phe_tRNA_synth_alpha1"/>
    <property type="match status" value="1"/>
</dbReference>
<dbReference type="InterPro" id="IPR006195">
    <property type="entry name" value="aa-tRNA-synth_II"/>
</dbReference>
<dbReference type="InterPro" id="IPR045864">
    <property type="entry name" value="aa-tRNA-synth_II/BPL/LPL"/>
</dbReference>
<dbReference type="InterPro" id="IPR004529">
    <property type="entry name" value="Phe-tRNA-synth_IIc_asu"/>
</dbReference>
<dbReference type="InterPro" id="IPR004188">
    <property type="entry name" value="Phe-tRNA_ligase_II_N"/>
</dbReference>
<dbReference type="InterPro" id="IPR022911">
    <property type="entry name" value="Phe_tRNA_ligase_alpha1_bac"/>
</dbReference>
<dbReference type="InterPro" id="IPR002319">
    <property type="entry name" value="Phenylalanyl-tRNA_Synthase"/>
</dbReference>
<dbReference type="InterPro" id="IPR010978">
    <property type="entry name" value="tRNA-bd_arm"/>
</dbReference>
<dbReference type="NCBIfam" id="TIGR00468">
    <property type="entry name" value="pheS"/>
    <property type="match status" value="1"/>
</dbReference>
<dbReference type="PANTHER" id="PTHR11538:SF41">
    <property type="entry name" value="PHENYLALANINE--TRNA LIGASE, MITOCHONDRIAL"/>
    <property type="match status" value="1"/>
</dbReference>
<dbReference type="PANTHER" id="PTHR11538">
    <property type="entry name" value="PHENYLALANYL-TRNA SYNTHETASE"/>
    <property type="match status" value="1"/>
</dbReference>
<dbReference type="Pfam" id="PF02912">
    <property type="entry name" value="Phe_tRNA-synt_N"/>
    <property type="match status" value="1"/>
</dbReference>
<dbReference type="Pfam" id="PF01409">
    <property type="entry name" value="tRNA-synt_2d"/>
    <property type="match status" value="1"/>
</dbReference>
<dbReference type="SUPFAM" id="SSF55681">
    <property type="entry name" value="Class II aaRS and biotin synthetases"/>
    <property type="match status" value="1"/>
</dbReference>
<dbReference type="SUPFAM" id="SSF46589">
    <property type="entry name" value="tRNA-binding arm"/>
    <property type="match status" value="1"/>
</dbReference>
<dbReference type="PROSITE" id="PS50862">
    <property type="entry name" value="AA_TRNA_LIGASE_II"/>
    <property type="match status" value="1"/>
</dbReference>
<gene>
    <name evidence="1" type="primary">pheS</name>
    <name type="ordered locus">PMT_0367</name>
</gene>
<protein>
    <recommendedName>
        <fullName evidence="1">Phenylalanine--tRNA ligase alpha subunit</fullName>
        <ecNumber evidence="1">6.1.1.20</ecNumber>
    </recommendedName>
    <alternativeName>
        <fullName evidence="1">Phenylalanyl-tRNA synthetase alpha subunit</fullName>
        <shortName evidence="1">PheRS</shortName>
    </alternativeName>
</protein>